<evidence type="ECO:0000255" key="1">
    <source>
        <dbReference type="HAMAP-Rule" id="MF_01382"/>
    </source>
</evidence>
<evidence type="ECO:0000256" key="2">
    <source>
        <dbReference type="SAM" id="MobiDB-lite"/>
    </source>
</evidence>
<sequence length="921" mass="102856">MFARLARALFGSANDRTLKAYQRRVPEINALEPAVQALSDEQLRHKTTEFKERLEKGETLDGLLPEAFAVCREASRRVLGKRHFDVQLIGGMVLHAGRIAEMRTGEGKTLVATLAVYLNALSGKGVHVVTVNDYLARRDAEEMSILYSFLGLTTGVIVPNLSDGERREAYAADITYGTNNEFGFDYLRDNMKYSLADMVQRPFNHAIVDEVDSILIDEARTPLIISGPADDSSDLYRSVDDVVVKLVQEPDVYDKDEKLRSVTLTEHGSHRVEELLAEAGVLQDGGLYDIHNVAVVHHVQQSLRAHTLFTRDVDYIVRDGKVVIIDEFTGRMMDGRRYSDGLHQALEAKEHVEIQQENQTLASITFQNYFRLYPKLSGMTGTAMTEADEFAEIYHLDVVEIPTNLPVRRIDTDDEVYLTAAEKFSAVADLIKEIHETGQPILVGTTSIEKSEYLSHILTQRGIPHNVLNARQHEKEAIIVAQAGAPGAITIATNMAGRGTDIKLGGNIEMLVKASTEGVEDEAQRESVEQNIRAIVEEHHEEVHKAGGLYVIGTERHESRRVDNQLRGRSGRQGDPGNSRFFLSLEDDLIRIFASDRMGAMMQKMGLKEGEAIVHPWLNKALEKAQKRVEARNFDMRKNTLKYDDVMNDQRKEVYAQRREYMATDDLSGVIAELREHTIEDLVHAHIPEKSFAEAWDTEGLTKEVSRILNLDLPIADWAKEDGMDSEGVIERIEAEAAKAQAARTANMGPELMRLIEKQVVLTTFDAVWKEYLHGLDQLRQGIGLRAYGQRDPLNEYKQEAFQMFTAMLDDMRIRVTETMCRIQAVSEPPPFPVINTETSGPSEEPAGLFSQGTTGGDIPAPQPMAGFPSAAPMPPRPQPVPTGAEPDAATLQRWYAETPRNALCPCGSGLKFKHCHGRLA</sequence>
<name>SECA_GLUOX</name>
<keyword id="KW-0067">ATP-binding</keyword>
<keyword id="KW-0997">Cell inner membrane</keyword>
<keyword id="KW-1003">Cell membrane</keyword>
<keyword id="KW-0963">Cytoplasm</keyword>
<keyword id="KW-0472">Membrane</keyword>
<keyword id="KW-0479">Metal-binding</keyword>
<keyword id="KW-0547">Nucleotide-binding</keyword>
<keyword id="KW-0653">Protein transport</keyword>
<keyword id="KW-1185">Reference proteome</keyword>
<keyword id="KW-1278">Translocase</keyword>
<keyword id="KW-0811">Translocation</keyword>
<keyword id="KW-0813">Transport</keyword>
<keyword id="KW-0862">Zinc</keyword>
<feature type="chain" id="PRO_0000320820" description="Protein translocase subunit SecA">
    <location>
        <begin position="1"/>
        <end position="921"/>
    </location>
</feature>
<feature type="region of interest" description="Disordered" evidence="2">
    <location>
        <begin position="831"/>
        <end position="886"/>
    </location>
</feature>
<feature type="compositionally biased region" description="Pro residues" evidence="2">
    <location>
        <begin position="872"/>
        <end position="881"/>
    </location>
</feature>
<feature type="binding site" evidence="1">
    <location>
        <position position="87"/>
    </location>
    <ligand>
        <name>ATP</name>
        <dbReference type="ChEBI" id="CHEBI:30616"/>
    </ligand>
</feature>
<feature type="binding site" evidence="1">
    <location>
        <begin position="105"/>
        <end position="109"/>
    </location>
    <ligand>
        <name>ATP</name>
        <dbReference type="ChEBI" id="CHEBI:30616"/>
    </ligand>
</feature>
<feature type="binding site" evidence="1">
    <location>
        <position position="501"/>
    </location>
    <ligand>
        <name>ATP</name>
        <dbReference type="ChEBI" id="CHEBI:30616"/>
    </ligand>
</feature>
<feature type="binding site" evidence="1">
    <location>
        <position position="905"/>
    </location>
    <ligand>
        <name>Zn(2+)</name>
        <dbReference type="ChEBI" id="CHEBI:29105"/>
    </ligand>
</feature>
<feature type="binding site" evidence="1">
    <location>
        <position position="907"/>
    </location>
    <ligand>
        <name>Zn(2+)</name>
        <dbReference type="ChEBI" id="CHEBI:29105"/>
    </ligand>
</feature>
<feature type="binding site" evidence="1">
    <location>
        <position position="916"/>
    </location>
    <ligand>
        <name>Zn(2+)</name>
        <dbReference type="ChEBI" id="CHEBI:29105"/>
    </ligand>
</feature>
<feature type="binding site" evidence="1">
    <location>
        <position position="917"/>
    </location>
    <ligand>
        <name>Zn(2+)</name>
        <dbReference type="ChEBI" id="CHEBI:29105"/>
    </ligand>
</feature>
<gene>
    <name evidence="1" type="primary">secA</name>
    <name type="ordered locus">GOX1678</name>
</gene>
<protein>
    <recommendedName>
        <fullName evidence="1">Protein translocase subunit SecA</fullName>
        <ecNumber evidence="1">7.4.2.8</ecNumber>
    </recommendedName>
</protein>
<proteinExistence type="inferred from homology"/>
<comment type="function">
    <text evidence="1">Part of the Sec protein translocase complex. Interacts with the SecYEG preprotein conducting channel. Has a central role in coupling the hydrolysis of ATP to the transfer of proteins into and across the cell membrane, serving both as a receptor for the preprotein-SecB complex and as an ATP-driven molecular motor driving the stepwise translocation of polypeptide chains across the membrane.</text>
</comment>
<comment type="catalytic activity">
    <reaction evidence="1">
        <text>ATP + H2O + cellular proteinSide 1 = ADP + phosphate + cellular proteinSide 2.</text>
        <dbReference type="EC" id="7.4.2.8"/>
    </reaction>
</comment>
<comment type="cofactor">
    <cofactor evidence="1">
        <name>Zn(2+)</name>
        <dbReference type="ChEBI" id="CHEBI:29105"/>
    </cofactor>
    <text evidence="1">May bind 1 zinc ion per subunit.</text>
</comment>
<comment type="subunit">
    <text evidence="1">Monomer and homodimer. Part of the essential Sec protein translocation apparatus which comprises SecA, SecYEG and auxiliary proteins SecDF-YajC and YidC.</text>
</comment>
<comment type="subcellular location">
    <subcellularLocation>
        <location evidence="1">Cell inner membrane</location>
        <topology evidence="1">Peripheral membrane protein</topology>
        <orientation evidence="1">Cytoplasmic side</orientation>
    </subcellularLocation>
    <subcellularLocation>
        <location evidence="1">Cytoplasm</location>
    </subcellularLocation>
    <text evidence="1">Distribution is 50-50.</text>
</comment>
<comment type="similarity">
    <text evidence="1">Belongs to the SecA family.</text>
</comment>
<dbReference type="EC" id="7.4.2.8" evidence="1"/>
<dbReference type="EMBL" id="CP000009">
    <property type="protein sequence ID" value="AAW61418.1"/>
    <property type="molecule type" value="Genomic_DNA"/>
</dbReference>
<dbReference type="RefSeq" id="WP_011253200.1">
    <property type="nucleotide sequence ID" value="NC_006677.1"/>
</dbReference>
<dbReference type="SMR" id="Q5FQC8"/>
<dbReference type="STRING" id="290633.GOX1678"/>
<dbReference type="KEGG" id="gox:GOX1678"/>
<dbReference type="eggNOG" id="COG0653">
    <property type="taxonomic scope" value="Bacteria"/>
</dbReference>
<dbReference type="HOGENOM" id="CLU_005314_3_0_5"/>
<dbReference type="Proteomes" id="UP000006375">
    <property type="component" value="Chromosome"/>
</dbReference>
<dbReference type="GO" id="GO:0031522">
    <property type="term" value="C:cell envelope Sec protein transport complex"/>
    <property type="evidence" value="ECO:0007669"/>
    <property type="project" value="TreeGrafter"/>
</dbReference>
<dbReference type="GO" id="GO:0005829">
    <property type="term" value="C:cytosol"/>
    <property type="evidence" value="ECO:0007669"/>
    <property type="project" value="TreeGrafter"/>
</dbReference>
<dbReference type="GO" id="GO:0005886">
    <property type="term" value="C:plasma membrane"/>
    <property type="evidence" value="ECO:0007669"/>
    <property type="project" value="UniProtKB-SubCell"/>
</dbReference>
<dbReference type="GO" id="GO:0005524">
    <property type="term" value="F:ATP binding"/>
    <property type="evidence" value="ECO:0007669"/>
    <property type="project" value="UniProtKB-UniRule"/>
</dbReference>
<dbReference type="GO" id="GO:0046872">
    <property type="term" value="F:metal ion binding"/>
    <property type="evidence" value="ECO:0007669"/>
    <property type="project" value="UniProtKB-KW"/>
</dbReference>
<dbReference type="GO" id="GO:0008564">
    <property type="term" value="F:protein-exporting ATPase activity"/>
    <property type="evidence" value="ECO:0007669"/>
    <property type="project" value="UniProtKB-EC"/>
</dbReference>
<dbReference type="GO" id="GO:0065002">
    <property type="term" value="P:intracellular protein transmembrane transport"/>
    <property type="evidence" value="ECO:0007669"/>
    <property type="project" value="UniProtKB-UniRule"/>
</dbReference>
<dbReference type="GO" id="GO:0017038">
    <property type="term" value="P:protein import"/>
    <property type="evidence" value="ECO:0007669"/>
    <property type="project" value="InterPro"/>
</dbReference>
<dbReference type="GO" id="GO:0006605">
    <property type="term" value="P:protein targeting"/>
    <property type="evidence" value="ECO:0007669"/>
    <property type="project" value="UniProtKB-UniRule"/>
</dbReference>
<dbReference type="GO" id="GO:0043952">
    <property type="term" value="P:protein transport by the Sec complex"/>
    <property type="evidence" value="ECO:0007669"/>
    <property type="project" value="TreeGrafter"/>
</dbReference>
<dbReference type="CDD" id="cd17928">
    <property type="entry name" value="DEXDc_SecA"/>
    <property type="match status" value="1"/>
</dbReference>
<dbReference type="CDD" id="cd18803">
    <property type="entry name" value="SF2_C_secA"/>
    <property type="match status" value="1"/>
</dbReference>
<dbReference type="FunFam" id="3.90.1440.10:FF:000001">
    <property type="entry name" value="Preprotein translocase subunit SecA"/>
    <property type="match status" value="1"/>
</dbReference>
<dbReference type="FunFam" id="1.10.3060.10:FF:000003">
    <property type="entry name" value="Protein translocase subunit SecA"/>
    <property type="match status" value="1"/>
</dbReference>
<dbReference type="FunFam" id="3.40.50.300:FF:000334">
    <property type="entry name" value="Protein translocase subunit SecA"/>
    <property type="match status" value="1"/>
</dbReference>
<dbReference type="FunFam" id="3.40.50.300:FF:001790">
    <property type="entry name" value="Protein translocase subunit SecA"/>
    <property type="match status" value="1"/>
</dbReference>
<dbReference type="Gene3D" id="3.10.450.50">
    <property type="match status" value="1"/>
</dbReference>
<dbReference type="Gene3D" id="1.10.3060.10">
    <property type="entry name" value="Helical scaffold and wing domains of SecA"/>
    <property type="match status" value="1"/>
</dbReference>
<dbReference type="Gene3D" id="3.40.50.300">
    <property type="entry name" value="P-loop containing nucleotide triphosphate hydrolases"/>
    <property type="match status" value="2"/>
</dbReference>
<dbReference type="Gene3D" id="3.90.1440.10">
    <property type="entry name" value="SecA, preprotein cross-linking domain"/>
    <property type="match status" value="1"/>
</dbReference>
<dbReference type="HAMAP" id="MF_01382">
    <property type="entry name" value="SecA"/>
    <property type="match status" value="1"/>
</dbReference>
<dbReference type="InterPro" id="IPR014001">
    <property type="entry name" value="Helicase_ATP-bd"/>
</dbReference>
<dbReference type="InterPro" id="IPR001650">
    <property type="entry name" value="Helicase_C-like"/>
</dbReference>
<dbReference type="InterPro" id="IPR027417">
    <property type="entry name" value="P-loop_NTPase"/>
</dbReference>
<dbReference type="InterPro" id="IPR004027">
    <property type="entry name" value="SEC_C_motif"/>
</dbReference>
<dbReference type="InterPro" id="IPR000185">
    <property type="entry name" value="SecA"/>
</dbReference>
<dbReference type="InterPro" id="IPR020937">
    <property type="entry name" value="SecA_CS"/>
</dbReference>
<dbReference type="InterPro" id="IPR011115">
    <property type="entry name" value="SecA_DEAD"/>
</dbReference>
<dbReference type="InterPro" id="IPR014018">
    <property type="entry name" value="SecA_motor_DEAD"/>
</dbReference>
<dbReference type="InterPro" id="IPR011130">
    <property type="entry name" value="SecA_preprotein_X-link_dom"/>
</dbReference>
<dbReference type="InterPro" id="IPR044722">
    <property type="entry name" value="SecA_SF2_C"/>
</dbReference>
<dbReference type="InterPro" id="IPR011116">
    <property type="entry name" value="SecA_Wing/Scaffold"/>
</dbReference>
<dbReference type="InterPro" id="IPR036266">
    <property type="entry name" value="SecA_Wing/Scaffold_sf"/>
</dbReference>
<dbReference type="InterPro" id="IPR036670">
    <property type="entry name" value="SecA_X-link_sf"/>
</dbReference>
<dbReference type="NCBIfam" id="NF009538">
    <property type="entry name" value="PRK12904.1"/>
    <property type="match status" value="1"/>
</dbReference>
<dbReference type="NCBIfam" id="TIGR00963">
    <property type="entry name" value="secA"/>
    <property type="match status" value="1"/>
</dbReference>
<dbReference type="PANTHER" id="PTHR30612:SF0">
    <property type="entry name" value="CHLOROPLAST PROTEIN-TRANSPORTING ATPASE"/>
    <property type="match status" value="1"/>
</dbReference>
<dbReference type="PANTHER" id="PTHR30612">
    <property type="entry name" value="SECA INNER MEMBRANE COMPONENT OF SEC PROTEIN SECRETION SYSTEM"/>
    <property type="match status" value="1"/>
</dbReference>
<dbReference type="Pfam" id="PF21090">
    <property type="entry name" value="P-loop_SecA"/>
    <property type="match status" value="1"/>
</dbReference>
<dbReference type="Pfam" id="PF02810">
    <property type="entry name" value="SEC-C"/>
    <property type="match status" value="1"/>
</dbReference>
<dbReference type="Pfam" id="PF07517">
    <property type="entry name" value="SecA_DEAD"/>
    <property type="match status" value="1"/>
</dbReference>
<dbReference type="Pfam" id="PF01043">
    <property type="entry name" value="SecA_PP_bind"/>
    <property type="match status" value="1"/>
</dbReference>
<dbReference type="Pfam" id="PF07516">
    <property type="entry name" value="SecA_SW"/>
    <property type="match status" value="1"/>
</dbReference>
<dbReference type="PRINTS" id="PR00906">
    <property type="entry name" value="SECA"/>
</dbReference>
<dbReference type="SMART" id="SM00957">
    <property type="entry name" value="SecA_DEAD"/>
    <property type="match status" value="1"/>
</dbReference>
<dbReference type="SMART" id="SM00958">
    <property type="entry name" value="SecA_PP_bind"/>
    <property type="match status" value="1"/>
</dbReference>
<dbReference type="SUPFAM" id="SSF81886">
    <property type="entry name" value="Helical scaffold and wing domains of SecA"/>
    <property type="match status" value="1"/>
</dbReference>
<dbReference type="SUPFAM" id="SSF52540">
    <property type="entry name" value="P-loop containing nucleoside triphosphate hydrolases"/>
    <property type="match status" value="2"/>
</dbReference>
<dbReference type="SUPFAM" id="SSF81767">
    <property type="entry name" value="Pre-protein crosslinking domain of SecA"/>
    <property type="match status" value="1"/>
</dbReference>
<dbReference type="PROSITE" id="PS01312">
    <property type="entry name" value="SECA"/>
    <property type="match status" value="1"/>
</dbReference>
<dbReference type="PROSITE" id="PS51196">
    <property type="entry name" value="SECA_MOTOR_DEAD"/>
    <property type="match status" value="1"/>
</dbReference>
<accession>Q5FQC8</accession>
<reference key="1">
    <citation type="journal article" date="2005" name="Nat. Biotechnol.">
        <title>Complete genome sequence of the acetic acid bacterium Gluconobacter oxydans.</title>
        <authorList>
            <person name="Prust C."/>
            <person name="Hoffmeister M."/>
            <person name="Liesegang H."/>
            <person name="Wiezer A."/>
            <person name="Fricke W.F."/>
            <person name="Ehrenreich A."/>
            <person name="Gottschalk G."/>
            <person name="Deppenmeier U."/>
        </authorList>
    </citation>
    <scope>NUCLEOTIDE SEQUENCE [LARGE SCALE GENOMIC DNA]</scope>
    <source>
        <strain>621H</strain>
    </source>
</reference>
<organism>
    <name type="scientific">Gluconobacter oxydans (strain 621H)</name>
    <name type="common">Gluconobacter suboxydans</name>
    <dbReference type="NCBI Taxonomy" id="290633"/>
    <lineage>
        <taxon>Bacteria</taxon>
        <taxon>Pseudomonadati</taxon>
        <taxon>Pseudomonadota</taxon>
        <taxon>Alphaproteobacteria</taxon>
        <taxon>Acetobacterales</taxon>
        <taxon>Acetobacteraceae</taxon>
        <taxon>Gluconobacter</taxon>
    </lineage>
</organism>